<dbReference type="EC" id="2.8.4.3" evidence="1"/>
<dbReference type="EMBL" id="CP001124">
    <property type="protein sequence ID" value="ACH37787.1"/>
    <property type="molecule type" value="Genomic_DNA"/>
</dbReference>
<dbReference type="RefSeq" id="WP_012529194.1">
    <property type="nucleotide sequence ID" value="NC_011146.1"/>
</dbReference>
<dbReference type="SMR" id="B5EE49"/>
<dbReference type="STRING" id="404380.Gbem_0761"/>
<dbReference type="KEGG" id="gbm:Gbem_0761"/>
<dbReference type="eggNOG" id="COG0621">
    <property type="taxonomic scope" value="Bacteria"/>
</dbReference>
<dbReference type="HOGENOM" id="CLU_018697_2_0_7"/>
<dbReference type="OrthoDB" id="9805215at2"/>
<dbReference type="Proteomes" id="UP000008825">
    <property type="component" value="Chromosome"/>
</dbReference>
<dbReference type="GO" id="GO:0005829">
    <property type="term" value="C:cytosol"/>
    <property type="evidence" value="ECO:0007669"/>
    <property type="project" value="TreeGrafter"/>
</dbReference>
<dbReference type="GO" id="GO:0051539">
    <property type="term" value="F:4 iron, 4 sulfur cluster binding"/>
    <property type="evidence" value="ECO:0007669"/>
    <property type="project" value="UniProtKB-UniRule"/>
</dbReference>
<dbReference type="GO" id="GO:0046872">
    <property type="term" value="F:metal ion binding"/>
    <property type="evidence" value="ECO:0007669"/>
    <property type="project" value="UniProtKB-KW"/>
</dbReference>
<dbReference type="GO" id="GO:0035597">
    <property type="term" value="F:N6-isopentenyladenosine methylthiotransferase activity"/>
    <property type="evidence" value="ECO:0007669"/>
    <property type="project" value="TreeGrafter"/>
</dbReference>
<dbReference type="CDD" id="cd01335">
    <property type="entry name" value="Radical_SAM"/>
    <property type="match status" value="1"/>
</dbReference>
<dbReference type="FunFam" id="3.40.50.12160:FF:000003">
    <property type="entry name" value="CDK5 regulatory subunit-associated protein 1"/>
    <property type="match status" value="1"/>
</dbReference>
<dbReference type="FunFam" id="3.80.30.20:FF:000001">
    <property type="entry name" value="tRNA-2-methylthio-N(6)-dimethylallyladenosine synthase 2"/>
    <property type="match status" value="1"/>
</dbReference>
<dbReference type="Gene3D" id="3.40.50.12160">
    <property type="entry name" value="Methylthiotransferase, N-terminal domain"/>
    <property type="match status" value="1"/>
</dbReference>
<dbReference type="Gene3D" id="3.80.30.20">
    <property type="entry name" value="tm_1862 like domain"/>
    <property type="match status" value="1"/>
</dbReference>
<dbReference type="HAMAP" id="MF_01864">
    <property type="entry name" value="tRNA_metthiotr_MiaB"/>
    <property type="match status" value="1"/>
</dbReference>
<dbReference type="InterPro" id="IPR006638">
    <property type="entry name" value="Elp3/MiaA/NifB-like_rSAM"/>
</dbReference>
<dbReference type="InterPro" id="IPR005839">
    <property type="entry name" value="Methylthiotransferase"/>
</dbReference>
<dbReference type="InterPro" id="IPR020612">
    <property type="entry name" value="Methylthiotransferase_CS"/>
</dbReference>
<dbReference type="InterPro" id="IPR013848">
    <property type="entry name" value="Methylthiotransferase_N"/>
</dbReference>
<dbReference type="InterPro" id="IPR038135">
    <property type="entry name" value="Methylthiotransferase_N_sf"/>
</dbReference>
<dbReference type="InterPro" id="IPR006463">
    <property type="entry name" value="MiaB_methiolase"/>
</dbReference>
<dbReference type="InterPro" id="IPR007197">
    <property type="entry name" value="rSAM"/>
</dbReference>
<dbReference type="InterPro" id="IPR023404">
    <property type="entry name" value="rSAM_horseshoe"/>
</dbReference>
<dbReference type="InterPro" id="IPR002792">
    <property type="entry name" value="TRAM_dom"/>
</dbReference>
<dbReference type="NCBIfam" id="TIGR01574">
    <property type="entry name" value="miaB-methiolase"/>
    <property type="match status" value="1"/>
</dbReference>
<dbReference type="NCBIfam" id="TIGR00089">
    <property type="entry name" value="MiaB/RimO family radical SAM methylthiotransferase"/>
    <property type="match status" value="1"/>
</dbReference>
<dbReference type="PANTHER" id="PTHR43020">
    <property type="entry name" value="CDK5 REGULATORY SUBUNIT-ASSOCIATED PROTEIN 1"/>
    <property type="match status" value="1"/>
</dbReference>
<dbReference type="PANTHER" id="PTHR43020:SF2">
    <property type="entry name" value="MITOCHONDRIAL TRNA METHYLTHIOTRANSFERASE CDK5RAP1"/>
    <property type="match status" value="1"/>
</dbReference>
<dbReference type="Pfam" id="PF04055">
    <property type="entry name" value="Radical_SAM"/>
    <property type="match status" value="1"/>
</dbReference>
<dbReference type="Pfam" id="PF01938">
    <property type="entry name" value="TRAM"/>
    <property type="match status" value="1"/>
</dbReference>
<dbReference type="Pfam" id="PF00919">
    <property type="entry name" value="UPF0004"/>
    <property type="match status" value="1"/>
</dbReference>
<dbReference type="SFLD" id="SFLDF00273">
    <property type="entry name" value="(dimethylallyl)adenosine_tRNA"/>
    <property type="match status" value="1"/>
</dbReference>
<dbReference type="SFLD" id="SFLDG01082">
    <property type="entry name" value="B12-binding_domain_containing"/>
    <property type="match status" value="1"/>
</dbReference>
<dbReference type="SFLD" id="SFLDS00029">
    <property type="entry name" value="Radical_SAM"/>
    <property type="match status" value="1"/>
</dbReference>
<dbReference type="SMART" id="SM00729">
    <property type="entry name" value="Elp3"/>
    <property type="match status" value="1"/>
</dbReference>
<dbReference type="SUPFAM" id="SSF102114">
    <property type="entry name" value="Radical SAM enzymes"/>
    <property type="match status" value="1"/>
</dbReference>
<dbReference type="PROSITE" id="PS51449">
    <property type="entry name" value="MTTASE_N"/>
    <property type="match status" value="1"/>
</dbReference>
<dbReference type="PROSITE" id="PS01278">
    <property type="entry name" value="MTTASE_RADICAL"/>
    <property type="match status" value="1"/>
</dbReference>
<dbReference type="PROSITE" id="PS51918">
    <property type="entry name" value="RADICAL_SAM"/>
    <property type="match status" value="1"/>
</dbReference>
<dbReference type="PROSITE" id="PS50926">
    <property type="entry name" value="TRAM"/>
    <property type="match status" value="1"/>
</dbReference>
<protein>
    <recommendedName>
        <fullName evidence="1">tRNA-2-methylthio-N(6)-dimethylallyladenosine synthase</fullName>
        <ecNumber evidence="1">2.8.4.3</ecNumber>
    </recommendedName>
    <alternativeName>
        <fullName evidence="1">(Dimethylallyl)adenosine tRNA methylthiotransferase MiaB</fullName>
    </alternativeName>
    <alternativeName>
        <fullName evidence="1">tRNA-i(6)A37 methylthiotransferase</fullName>
    </alternativeName>
</protein>
<evidence type="ECO:0000255" key="1">
    <source>
        <dbReference type="HAMAP-Rule" id="MF_01864"/>
    </source>
</evidence>
<evidence type="ECO:0000255" key="2">
    <source>
        <dbReference type="PROSITE-ProRule" id="PRU01266"/>
    </source>
</evidence>
<name>MIAB_CITBB</name>
<organism>
    <name type="scientific">Citrifermentans bemidjiense (strain ATCC BAA-1014 / DSM 16622 / JCM 12645 / Bem)</name>
    <name type="common">Geobacter bemidjiensis</name>
    <dbReference type="NCBI Taxonomy" id="404380"/>
    <lineage>
        <taxon>Bacteria</taxon>
        <taxon>Pseudomonadati</taxon>
        <taxon>Thermodesulfobacteriota</taxon>
        <taxon>Desulfuromonadia</taxon>
        <taxon>Geobacterales</taxon>
        <taxon>Geobacteraceae</taxon>
        <taxon>Citrifermentans</taxon>
    </lineage>
</organism>
<gene>
    <name evidence="1" type="primary">miaB</name>
    <name type="ordered locus">Gbem_0761</name>
</gene>
<comment type="function">
    <text evidence="1">Catalyzes the methylthiolation of N6-(dimethylallyl)adenosine (i(6)A), leading to the formation of 2-methylthio-N6-(dimethylallyl)adenosine (ms(2)i(6)A) at position 37 in tRNAs that read codons beginning with uridine.</text>
</comment>
<comment type="catalytic activity">
    <reaction evidence="1">
        <text>N(6)-dimethylallyladenosine(37) in tRNA + (sulfur carrier)-SH + AH2 + 2 S-adenosyl-L-methionine = 2-methylsulfanyl-N(6)-dimethylallyladenosine(37) in tRNA + (sulfur carrier)-H + 5'-deoxyadenosine + L-methionine + A + S-adenosyl-L-homocysteine + 2 H(+)</text>
        <dbReference type="Rhea" id="RHEA:37067"/>
        <dbReference type="Rhea" id="RHEA-COMP:10375"/>
        <dbReference type="Rhea" id="RHEA-COMP:10376"/>
        <dbReference type="Rhea" id="RHEA-COMP:14737"/>
        <dbReference type="Rhea" id="RHEA-COMP:14739"/>
        <dbReference type="ChEBI" id="CHEBI:13193"/>
        <dbReference type="ChEBI" id="CHEBI:15378"/>
        <dbReference type="ChEBI" id="CHEBI:17319"/>
        <dbReference type="ChEBI" id="CHEBI:17499"/>
        <dbReference type="ChEBI" id="CHEBI:29917"/>
        <dbReference type="ChEBI" id="CHEBI:57844"/>
        <dbReference type="ChEBI" id="CHEBI:57856"/>
        <dbReference type="ChEBI" id="CHEBI:59789"/>
        <dbReference type="ChEBI" id="CHEBI:64428"/>
        <dbReference type="ChEBI" id="CHEBI:74415"/>
        <dbReference type="ChEBI" id="CHEBI:74417"/>
        <dbReference type="EC" id="2.8.4.3"/>
    </reaction>
</comment>
<comment type="cofactor">
    <cofactor evidence="1">
        <name>[4Fe-4S] cluster</name>
        <dbReference type="ChEBI" id="CHEBI:49883"/>
    </cofactor>
    <text evidence="1">Binds 2 [4Fe-4S] clusters. One cluster is coordinated with 3 cysteines and an exchangeable S-adenosyl-L-methionine.</text>
</comment>
<comment type="subunit">
    <text evidence="1">Monomer.</text>
</comment>
<comment type="subcellular location">
    <subcellularLocation>
        <location evidence="1">Cytoplasm</location>
    </subcellularLocation>
</comment>
<comment type="similarity">
    <text evidence="1">Belongs to the methylthiotransferase family. MiaB subfamily.</text>
</comment>
<keyword id="KW-0004">4Fe-4S</keyword>
<keyword id="KW-0963">Cytoplasm</keyword>
<keyword id="KW-0408">Iron</keyword>
<keyword id="KW-0411">Iron-sulfur</keyword>
<keyword id="KW-0479">Metal-binding</keyword>
<keyword id="KW-1185">Reference proteome</keyword>
<keyword id="KW-0949">S-adenosyl-L-methionine</keyword>
<keyword id="KW-0808">Transferase</keyword>
<keyword id="KW-0819">tRNA processing</keyword>
<reference key="1">
    <citation type="submission" date="2008-07" db="EMBL/GenBank/DDBJ databases">
        <title>Complete sequence of Geobacter bemidjiensis BEM.</title>
        <authorList>
            <consortium name="US DOE Joint Genome Institute"/>
            <person name="Lucas S."/>
            <person name="Copeland A."/>
            <person name="Lapidus A."/>
            <person name="Glavina del Rio T."/>
            <person name="Dalin E."/>
            <person name="Tice H."/>
            <person name="Bruce D."/>
            <person name="Goodwin L."/>
            <person name="Pitluck S."/>
            <person name="Kiss H."/>
            <person name="Brettin T."/>
            <person name="Detter J.C."/>
            <person name="Han C."/>
            <person name="Kuske C.R."/>
            <person name="Schmutz J."/>
            <person name="Larimer F."/>
            <person name="Land M."/>
            <person name="Hauser L."/>
            <person name="Kyrpides N."/>
            <person name="Lykidis A."/>
            <person name="Lovley D."/>
            <person name="Richardson P."/>
        </authorList>
    </citation>
    <scope>NUCLEOTIDE SEQUENCE [LARGE SCALE GENOMIC DNA]</scope>
    <source>
        <strain>ATCC BAA-1014 / DSM 16622 / JCM 12645 / Bem</strain>
    </source>
</reference>
<sequence length="441" mass="48221">MNQAKKLYLETFGCQMNVSDSEKIVTLMKGMGYQQTQDPVDADLVLLNTCSIRATAEQRVYGHLGKFKSIKKTKPGLIIGVGGCVAQQEGEKLLKKAPFVNLVFGTHNLHLLQGMVAAAEEGKRSSQTDFLDDEKRFDLFPHSEAEGGVTRFVTVMQGCDNFCAYCIVPHVRGREISRSAAKVVEEVRALADSGVTEVTLLGQNVNSYCSKQPGEPDFPDLLRLVAQVDGIERIRFTTSHPKDMSPRLIECFADLPKLAPHIHLPAQSGSDRVLERMNRGYTAQQYLAKVAALKEACPAIQFTGDMIVGFPGEDEAAFQDTMALMEQVQYADLFSFIYSARPGTKAAEYADDATRAEKQGRLERLQAAQKKTTLARNRSLEGTVQKVLVEGLSSTGDSLFGRTGGNRGTVMAGDPSLAGRVLDVKIVEGLQTLLKGEIVHD</sequence>
<feature type="chain" id="PRO_0000374317" description="tRNA-2-methylthio-N(6)-dimethylallyladenosine synthase">
    <location>
        <begin position="1"/>
        <end position="441"/>
    </location>
</feature>
<feature type="domain" description="MTTase N-terminal" evidence="1">
    <location>
        <begin position="5"/>
        <end position="121"/>
    </location>
</feature>
<feature type="domain" description="Radical SAM core" evidence="2">
    <location>
        <begin position="145"/>
        <end position="375"/>
    </location>
</feature>
<feature type="domain" description="TRAM" evidence="1">
    <location>
        <begin position="378"/>
        <end position="440"/>
    </location>
</feature>
<feature type="binding site" evidence="1">
    <location>
        <position position="14"/>
    </location>
    <ligand>
        <name>[4Fe-4S] cluster</name>
        <dbReference type="ChEBI" id="CHEBI:49883"/>
        <label>1</label>
    </ligand>
</feature>
<feature type="binding site" evidence="1">
    <location>
        <position position="50"/>
    </location>
    <ligand>
        <name>[4Fe-4S] cluster</name>
        <dbReference type="ChEBI" id="CHEBI:49883"/>
        <label>1</label>
    </ligand>
</feature>
<feature type="binding site" evidence="1">
    <location>
        <position position="84"/>
    </location>
    <ligand>
        <name>[4Fe-4S] cluster</name>
        <dbReference type="ChEBI" id="CHEBI:49883"/>
        <label>1</label>
    </ligand>
</feature>
<feature type="binding site" evidence="1">
    <location>
        <position position="159"/>
    </location>
    <ligand>
        <name>[4Fe-4S] cluster</name>
        <dbReference type="ChEBI" id="CHEBI:49883"/>
        <label>2</label>
        <note>4Fe-4S-S-AdoMet</note>
    </ligand>
</feature>
<feature type="binding site" evidence="1">
    <location>
        <position position="163"/>
    </location>
    <ligand>
        <name>[4Fe-4S] cluster</name>
        <dbReference type="ChEBI" id="CHEBI:49883"/>
        <label>2</label>
        <note>4Fe-4S-S-AdoMet</note>
    </ligand>
</feature>
<feature type="binding site" evidence="1">
    <location>
        <position position="166"/>
    </location>
    <ligand>
        <name>[4Fe-4S] cluster</name>
        <dbReference type="ChEBI" id="CHEBI:49883"/>
        <label>2</label>
        <note>4Fe-4S-S-AdoMet</note>
    </ligand>
</feature>
<proteinExistence type="inferred from homology"/>
<accession>B5EE49</accession>